<comment type="function">
    <text evidence="1">Involved in unsaturated fatty acids biosynthesis. Catalyzes the dehydration of short chain beta-hydroxyacyl-ACPs and long chain saturated and unsaturated beta-hydroxyacyl-ACPs.</text>
</comment>
<comment type="catalytic activity">
    <reaction evidence="1">
        <text>a (3R)-hydroxyacyl-[ACP] = a (2E)-enoyl-[ACP] + H2O</text>
        <dbReference type="Rhea" id="RHEA:13097"/>
        <dbReference type="Rhea" id="RHEA-COMP:9925"/>
        <dbReference type="Rhea" id="RHEA-COMP:9945"/>
        <dbReference type="ChEBI" id="CHEBI:15377"/>
        <dbReference type="ChEBI" id="CHEBI:78784"/>
        <dbReference type="ChEBI" id="CHEBI:78827"/>
        <dbReference type="EC" id="4.2.1.59"/>
    </reaction>
</comment>
<comment type="subcellular location">
    <subcellularLocation>
        <location evidence="1">Cytoplasm</location>
    </subcellularLocation>
</comment>
<comment type="similarity">
    <text evidence="1">Belongs to the thioester dehydratase family. FabZ subfamily.</text>
</comment>
<dbReference type="EC" id="4.2.1.59" evidence="1"/>
<dbReference type="EMBL" id="CP000512">
    <property type="protein sequence ID" value="ABM32418.1"/>
    <property type="molecule type" value="Genomic_DNA"/>
</dbReference>
<dbReference type="RefSeq" id="WP_011794964.1">
    <property type="nucleotide sequence ID" value="NC_008752.1"/>
</dbReference>
<dbReference type="SMR" id="A1TN80"/>
<dbReference type="STRING" id="397945.Aave_1834"/>
<dbReference type="GeneID" id="79793157"/>
<dbReference type="KEGG" id="aav:Aave_1834"/>
<dbReference type="eggNOG" id="COG0764">
    <property type="taxonomic scope" value="Bacteria"/>
</dbReference>
<dbReference type="HOGENOM" id="CLU_078912_1_0_4"/>
<dbReference type="OrthoDB" id="9772788at2"/>
<dbReference type="Proteomes" id="UP000002596">
    <property type="component" value="Chromosome"/>
</dbReference>
<dbReference type="GO" id="GO:0005737">
    <property type="term" value="C:cytoplasm"/>
    <property type="evidence" value="ECO:0007669"/>
    <property type="project" value="UniProtKB-SubCell"/>
</dbReference>
<dbReference type="GO" id="GO:0016020">
    <property type="term" value="C:membrane"/>
    <property type="evidence" value="ECO:0007669"/>
    <property type="project" value="GOC"/>
</dbReference>
<dbReference type="GO" id="GO:0019171">
    <property type="term" value="F:(3R)-hydroxyacyl-[acyl-carrier-protein] dehydratase activity"/>
    <property type="evidence" value="ECO:0007669"/>
    <property type="project" value="UniProtKB-EC"/>
</dbReference>
<dbReference type="GO" id="GO:0006633">
    <property type="term" value="P:fatty acid biosynthetic process"/>
    <property type="evidence" value="ECO:0007669"/>
    <property type="project" value="UniProtKB-UniRule"/>
</dbReference>
<dbReference type="GO" id="GO:0009245">
    <property type="term" value="P:lipid A biosynthetic process"/>
    <property type="evidence" value="ECO:0007669"/>
    <property type="project" value="UniProtKB-UniRule"/>
</dbReference>
<dbReference type="CDD" id="cd01288">
    <property type="entry name" value="FabZ"/>
    <property type="match status" value="1"/>
</dbReference>
<dbReference type="FunFam" id="3.10.129.10:FF:000001">
    <property type="entry name" value="3-hydroxyacyl-[acyl-carrier-protein] dehydratase FabZ"/>
    <property type="match status" value="1"/>
</dbReference>
<dbReference type="Gene3D" id="3.10.129.10">
    <property type="entry name" value="Hotdog Thioesterase"/>
    <property type="match status" value="1"/>
</dbReference>
<dbReference type="HAMAP" id="MF_00406">
    <property type="entry name" value="FabZ"/>
    <property type="match status" value="1"/>
</dbReference>
<dbReference type="InterPro" id="IPR013114">
    <property type="entry name" value="FabA_FabZ"/>
</dbReference>
<dbReference type="InterPro" id="IPR010084">
    <property type="entry name" value="FabZ"/>
</dbReference>
<dbReference type="InterPro" id="IPR029069">
    <property type="entry name" value="HotDog_dom_sf"/>
</dbReference>
<dbReference type="NCBIfam" id="TIGR01750">
    <property type="entry name" value="fabZ"/>
    <property type="match status" value="1"/>
</dbReference>
<dbReference type="NCBIfam" id="NF000582">
    <property type="entry name" value="PRK00006.1"/>
    <property type="match status" value="1"/>
</dbReference>
<dbReference type="PANTHER" id="PTHR30272">
    <property type="entry name" value="3-HYDROXYACYL-[ACYL-CARRIER-PROTEIN] DEHYDRATASE"/>
    <property type="match status" value="1"/>
</dbReference>
<dbReference type="PANTHER" id="PTHR30272:SF1">
    <property type="entry name" value="3-HYDROXYACYL-[ACYL-CARRIER-PROTEIN] DEHYDRATASE"/>
    <property type="match status" value="1"/>
</dbReference>
<dbReference type="Pfam" id="PF07977">
    <property type="entry name" value="FabA"/>
    <property type="match status" value="1"/>
</dbReference>
<dbReference type="SUPFAM" id="SSF54637">
    <property type="entry name" value="Thioesterase/thiol ester dehydrase-isomerase"/>
    <property type="match status" value="1"/>
</dbReference>
<gene>
    <name evidence="1" type="primary">fabZ</name>
    <name type="ordered locus">Aave_1834</name>
</gene>
<protein>
    <recommendedName>
        <fullName evidence="1">3-hydroxyacyl-[acyl-carrier-protein] dehydratase FabZ</fullName>
        <ecNumber evidence="1">4.2.1.59</ecNumber>
    </recommendedName>
    <alternativeName>
        <fullName evidence="1">(3R)-hydroxymyristoyl-[acyl-carrier-protein] dehydratase</fullName>
        <shortName evidence="1">(3R)-hydroxymyristoyl-ACP dehydrase</shortName>
    </alternativeName>
    <alternativeName>
        <fullName evidence="1">Beta-hydroxyacyl-ACP dehydratase</fullName>
    </alternativeName>
</protein>
<reference key="1">
    <citation type="submission" date="2006-12" db="EMBL/GenBank/DDBJ databases">
        <title>Complete sequence of Acidovorax avenae subsp. citrulli AAC00-1.</title>
        <authorList>
            <person name="Copeland A."/>
            <person name="Lucas S."/>
            <person name="Lapidus A."/>
            <person name="Barry K."/>
            <person name="Detter J.C."/>
            <person name="Glavina del Rio T."/>
            <person name="Dalin E."/>
            <person name="Tice H."/>
            <person name="Pitluck S."/>
            <person name="Kiss H."/>
            <person name="Brettin T."/>
            <person name="Bruce D."/>
            <person name="Han C."/>
            <person name="Tapia R."/>
            <person name="Gilna P."/>
            <person name="Schmutz J."/>
            <person name="Larimer F."/>
            <person name="Land M."/>
            <person name="Hauser L."/>
            <person name="Kyrpides N."/>
            <person name="Kim E."/>
            <person name="Stahl D."/>
            <person name="Richardson P."/>
        </authorList>
    </citation>
    <scope>NUCLEOTIDE SEQUENCE [LARGE SCALE GENOMIC DNA]</scope>
    <source>
        <strain>AAC00-1</strain>
    </source>
</reference>
<keyword id="KW-0963">Cytoplasm</keyword>
<keyword id="KW-0441">Lipid A biosynthesis</keyword>
<keyword id="KW-0444">Lipid biosynthesis</keyword>
<keyword id="KW-0443">Lipid metabolism</keyword>
<keyword id="KW-0456">Lyase</keyword>
<name>FABZ_PARC0</name>
<evidence type="ECO:0000255" key="1">
    <source>
        <dbReference type="HAMAP-Rule" id="MF_00406"/>
    </source>
</evidence>
<accession>A1TN80</accession>
<proteinExistence type="inferred from homology"/>
<feature type="chain" id="PRO_0000340751" description="3-hydroxyacyl-[acyl-carrier-protein] dehydratase FabZ">
    <location>
        <begin position="1"/>
        <end position="146"/>
    </location>
</feature>
<feature type="active site" evidence="1">
    <location>
        <position position="48"/>
    </location>
</feature>
<organism>
    <name type="scientific">Paracidovorax citrulli (strain AAC00-1)</name>
    <name type="common">Acidovorax citrulli</name>
    <dbReference type="NCBI Taxonomy" id="397945"/>
    <lineage>
        <taxon>Bacteria</taxon>
        <taxon>Pseudomonadati</taxon>
        <taxon>Pseudomonadota</taxon>
        <taxon>Betaproteobacteria</taxon>
        <taxon>Burkholderiales</taxon>
        <taxon>Comamonadaceae</taxon>
        <taxon>Paracidovorax</taxon>
    </lineage>
</organism>
<sequence>MMDIHQILKLLPHRYPFLLVDRVVELERGERIQAIKNVTINEPFFTGHFPNRPVMPGVLMLEALAQAAGLLSFDMMGEAPGDDKVFYFVGIDGARFKRPVEPGDQLILDVKLDRIKGGIYKFGGVARVGDSVACEAEIMCTMRTVA</sequence>